<sequence length="679" mass="79499">MSLSKSKVKSKIKELNEKLKLYNHHYYNKNESLVSDEYYDAKLLELENIRDNFPEEYNQVFQKDFSKSVLEKVNHLDEQDVKLKKEKHQKLMLSLNKAYSFEDLERYTNRINTFVGNNHQYILQEKIDGVSISLYYENGILTKALTRGDGIYGENVTHNALNIKDIPKTINIKENIELRGEIFFSLKLFESLKNEFLDKQDGTKNKKWNTPRNKASGILKSLKTTDESSWLSCFIYEVVSPENFNLKTQKQLFDFLKIQGFNLPKFEFIENENLIENFITNFKFEDDQRDYEIDGLVIKLNDLSLYDLLGKTSKFFHHSIAYKFRKKFVMTKIEDIFVTVGRTGLITYNAKLQEVVLNGSKIKAATLHNYEYIKNIKINIGDKVYIEKAGEIIPRVVKLVSPKNDQNYFSPIEFCPSCKNKLSWSENMLNQFCLNPDCIEKKIQKLKYFVSKDGMEIQELGGKKIELFFAKGWVKKIEDIYNLKNNYDDLLKLENFQEHSVNVLLHKIEESKDVYTWKLIAALGIKNIGKKLAKSLVKIIFENDQKNLLSLLEFNYDELEKYDEFGSVKIESLKEFFANDENRNLIQFLDQNGFELKMEKEIIQSTKLENKTFLITGTLEKPRDFYKNLIIQNGGIISSSISKKLDYLIVGQNPGSKEKKAMELNIKIIDEEFLKKMLE</sequence>
<gene>
    <name evidence="1" type="primary">ligA</name>
    <name type="ordered locus">MYPU_3890</name>
</gene>
<organism>
    <name type="scientific">Mycoplasmopsis pulmonis (strain UAB CTIP)</name>
    <name type="common">Mycoplasma pulmonis</name>
    <dbReference type="NCBI Taxonomy" id="272635"/>
    <lineage>
        <taxon>Bacteria</taxon>
        <taxon>Bacillati</taxon>
        <taxon>Mycoplasmatota</taxon>
        <taxon>Mycoplasmoidales</taxon>
        <taxon>Metamycoplasmataceae</taxon>
        <taxon>Mycoplasmopsis</taxon>
    </lineage>
</organism>
<name>DNLJ_MYCPU</name>
<feature type="chain" id="PRO_0000313327" description="DNA ligase">
    <location>
        <begin position="1"/>
        <end position="679"/>
    </location>
</feature>
<feature type="domain" description="BRCT" evidence="1">
    <location>
        <begin position="603"/>
        <end position="679"/>
    </location>
</feature>
<feature type="active site" description="N6-AMP-lysine intermediate" evidence="1">
    <location>
        <position position="126"/>
    </location>
</feature>
<feature type="binding site" evidence="1">
    <location>
        <begin position="36"/>
        <end position="40"/>
    </location>
    <ligand>
        <name>NAD(+)</name>
        <dbReference type="ChEBI" id="CHEBI:57540"/>
    </ligand>
</feature>
<feature type="binding site" evidence="1">
    <location>
        <begin position="94"/>
        <end position="95"/>
    </location>
    <ligand>
        <name>NAD(+)</name>
        <dbReference type="ChEBI" id="CHEBI:57540"/>
    </ligand>
</feature>
<feature type="binding site" evidence="1">
    <location>
        <position position="147"/>
    </location>
    <ligand>
        <name>NAD(+)</name>
        <dbReference type="ChEBI" id="CHEBI:57540"/>
    </ligand>
</feature>
<feature type="binding site" evidence="1">
    <location>
        <position position="181"/>
    </location>
    <ligand>
        <name>NAD(+)</name>
        <dbReference type="ChEBI" id="CHEBI:57540"/>
    </ligand>
</feature>
<feature type="binding site" evidence="1">
    <location>
        <position position="299"/>
    </location>
    <ligand>
        <name>NAD(+)</name>
        <dbReference type="ChEBI" id="CHEBI:57540"/>
    </ligand>
</feature>
<feature type="binding site" evidence="1">
    <location>
        <position position="323"/>
    </location>
    <ligand>
        <name>NAD(+)</name>
        <dbReference type="ChEBI" id="CHEBI:57540"/>
    </ligand>
</feature>
<feature type="binding site" evidence="1">
    <location>
        <position position="415"/>
    </location>
    <ligand>
        <name>Zn(2+)</name>
        <dbReference type="ChEBI" id="CHEBI:29105"/>
    </ligand>
</feature>
<feature type="binding site" evidence="1">
    <location>
        <position position="418"/>
    </location>
    <ligand>
        <name>Zn(2+)</name>
        <dbReference type="ChEBI" id="CHEBI:29105"/>
    </ligand>
</feature>
<feature type="binding site" evidence="1">
    <location>
        <position position="433"/>
    </location>
    <ligand>
        <name>Zn(2+)</name>
        <dbReference type="ChEBI" id="CHEBI:29105"/>
    </ligand>
</feature>
<feature type="binding site" evidence="1">
    <location>
        <position position="438"/>
    </location>
    <ligand>
        <name>Zn(2+)</name>
        <dbReference type="ChEBI" id="CHEBI:29105"/>
    </ligand>
</feature>
<dbReference type="EC" id="6.5.1.2" evidence="1"/>
<dbReference type="EMBL" id="AL445564">
    <property type="protein sequence ID" value="CAC13562.1"/>
    <property type="molecule type" value="Genomic_DNA"/>
</dbReference>
<dbReference type="PIR" id="E90560">
    <property type="entry name" value="E90560"/>
</dbReference>
<dbReference type="RefSeq" id="WP_010925193.1">
    <property type="nucleotide sequence ID" value="NC_002771.1"/>
</dbReference>
<dbReference type="SMR" id="Q98QH2"/>
<dbReference type="STRING" id="272635.gene:17576989"/>
<dbReference type="KEGG" id="mpu:MYPU_3890"/>
<dbReference type="eggNOG" id="COG0272">
    <property type="taxonomic scope" value="Bacteria"/>
</dbReference>
<dbReference type="HOGENOM" id="CLU_007764_2_0_14"/>
<dbReference type="BioCyc" id="MPUL272635:G1GT6-396-MONOMER"/>
<dbReference type="Proteomes" id="UP000000528">
    <property type="component" value="Chromosome"/>
</dbReference>
<dbReference type="GO" id="GO:0003911">
    <property type="term" value="F:DNA ligase (NAD+) activity"/>
    <property type="evidence" value="ECO:0007669"/>
    <property type="project" value="UniProtKB-UniRule"/>
</dbReference>
<dbReference type="GO" id="GO:0046872">
    <property type="term" value="F:metal ion binding"/>
    <property type="evidence" value="ECO:0007669"/>
    <property type="project" value="UniProtKB-KW"/>
</dbReference>
<dbReference type="GO" id="GO:0006281">
    <property type="term" value="P:DNA repair"/>
    <property type="evidence" value="ECO:0007669"/>
    <property type="project" value="UniProtKB-KW"/>
</dbReference>
<dbReference type="GO" id="GO:0006260">
    <property type="term" value="P:DNA replication"/>
    <property type="evidence" value="ECO:0007669"/>
    <property type="project" value="UniProtKB-KW"/>
</dbReference>
<dbReference type="CDD" id="cd17748">
    <property type="entry name" value="BRCT_DNA_ligase_like"/>
    <property type="match status" value="1"/>
</dbReference>
<dbReference type="CDD" id="cd00114">
    <property type="entry name" value="LIGANc"/>
    <property type="match status" value="1"/>
</dbReference>
<dbReference type="Gene3D" id="1.10.150.20">
    <property type="entry name" value="5' to 3' exonuclease, C-terminal subdomain"/>
    <property type="match status" value="2"/>
</dbReference>
<dbReference type="Gene3D" id="3.40.50.10190">
    <property type="entry name" value="BRCT domain"/>
    <property type="match status" value="1"/>
</dbReference>
<dbReference type="Gene3D" id="3.30.470.30">
    <property type="entry name" value="DNA ligase/mRNA capping enzyme"/>
    <property type="match status" value="1"/>
</dbReference>
<dbReference type="Gene3D" id="1.10.287.610">
    <property type="entry name" value="Helix hairpin bin"/>
    <property type="match status" value="1"/>
</dbReference>
<dbReference type="Gene3D" id="2.40.50.140">
    <property type="entry name" value="Nucleic acid-binding proteins"/>
    <property type="match status" value="1"/>
</dbReference>
<dbReference type="HAMAP" id="MF_01588">
    <property type="entry name" value="DNA_ligase_A"/>
    <property type="match status" value="1"/>
</dbReference>
<dbReference type="InterPro" id="IPR001357">
    <property type="entry name" value="BRCT_dom"/>
</dbReference>
<dbReference type="InterPro" id="IPR036420">
    <property type="entry name" value="BRCT_dom_sf"/>
</dbReference>
<dbReference type="InterPro" id="IPR041663">
    <property type="entry name" value="DisA/LigA_HHH"/>
</dbReference>
<dbReference type="InterPro" id="IPR001679">
    <property type="entry name" value="DNA_ligase"/>
</dbReference>
<dbReference type="InterPro" id="IPR018239">
    <property type="entry name" value="DNA_ligase_AS"/>
</dbReference>
<dbReference type="InterPro" id="IPR013839">
    <property type="entry name" value="DNAligase_adenylation"/>
</dbReference>
<dbReference type="InterPro" id="IPR013840">
    <property type="entry name" value="DNAligase_N"/>
</dbReference>
<dbReference type="InterPro" id="IPR012340">
    <property type="entry name" value="NA-bd_OB-fold"/>
</dbReference>
<dbReference type="InterPro" id="IPR004150">
    <property type="entry name" value="NAD_DNA_ligase_OB"/>
</dbReference>
<dbReference type="InterPro" id="IPR010994">
    <property type="entry name" value="RuvA_2-like"/>
</dbReference>
<dbReference type="NCBIfam" id="TIGR00575">
    <property type="entry name" value="dnlj"/>
    <property type="match status" value="1"/>
</dbReference>
<dbReference type="NCBIfam" id="NF005932">
    <property type="entry name" value="PRK07956.1"/>
    <property type="match status" value="1"/>
</dbReference>
<dbReference type="Pfam" id="PF00533">
    <property type="entry name" value="BRCT"/>
    <property type="match status" value="1"/>
</dbReference>
<dbReference type="Pfam" id="PF01653">
    <property type="entry name" value="DNA_ligase_aden"/>
    <property type="match status" value="1"/>
</dbReference>
<dbReference type="Pfam" id="PF03120">
    <property type="entry name" value="DNA_ligase_OB"/>
    <property type="match status" value="1"/>
</dbReference>
<dbReference type="Pfam" id="PF12826">
    <property type="entry name" value="HHH_2"/>
    <property type="match status" value="1"/>
</dbReference>
<dbReference type="PIRSF" id="PIRSF001604">
    <property type="entry name" value="LigA"/>
    <property type="match status" value="1"/>
</dbReference>
<dbReference type="SMART" id="SM00292">
    <property type="entry name" value="BRCT"/>
    <property type="match status" value="1"/>
</dbReference>
<dbReference type="SMART" id="SM00532">
    <property type="entry name" value="LIGANc"/>
    <property type="match status" value="1"/>
</dbReference>
<dbReference type="SUPFAM" id="SSF52113">
    <property type="entry name" value="BRCT domain"/>
    <property type="match status" value="1"/>
</dbReference>
<dbReference type="SUPFAM" id="SSF56091">
    <property type="entry name" value="DNA ligase/mRNA capping enzyme, catalytic domain"/>
    <property type="match status" value="1"/>
</dbReference>
<dbReference type="SUPFAM" id="SSF50249">
    <property type="entry name" value="Nucleic acid-binding proteins"/>
    <property type="match status" value="1"/>
</dbReference>
<dbReference type="SUPFAM" id="SSF47781">
    <property type="entry name" value="RuvA domain 2-like"/>
    <property type="match status" value="1"/>
</dbReference>
<dbReference type="PROSITE" id="PS50172">
    <property type="entry name" value="BRCT"/>
    <property type="match status" value="1"/>
</dbReference>
<dbReference type="PROSITE" id="PS01055">
    <property type="entry name" value="DNA_LIGASE_N1"/>
    <property type="match status" value="1"/>
</dbReference>
<comment type="function">
    <text evidence="1">DNA ligase that catalyzes the formation of phosphodiester linkages between 5'-phosphoryl and 3'-hydroxyl groups in double-stranded DNA using NAD as a coenzyme and as the energy source for the reaction. It is essential for DNA replication and repair of damaged DNA.</text>
</comment>
<comment type="catalytic activity">
    <reaction evidence="1">
        <text>NAD(+) + (deoxyribonucleotide)n-3'-hydroxyl + 5'-phospho-(deoxyribonucleotide)m = (deoxyribonucleotide)n+m + AMP + beta-nicotinamide D-nucleotide.</text>
        <dbReference type="EC" id="6.5.1.2"/>
    </reaction>
</comment>
<comment type="cofactor">
    <cofactor evidence="1">
        <name>Mg(2+)</name>
        <dbReference type="ChEBI" id="CHEBI:18420"/>
    </cofactor>
    <cofactor evidence="1">
        <name>Mn(2+)</name>
        <dbReference type="ChEBI" id="CHEBI:29035"/>
    </cofactor>
</comment>
<comment type="similarity">
    <text evidence="1">Belongs to the NAD-dependent DNA ligase family. LigA subfamily.</text>
</comment>
<reference key="1">
    <citation type="journal article" date="2001" name="Nucleic Acids Res.">
        <title>The complete genome sequence of the murine respiratory pathogen Mycoplasma pulmonis.</title>
        <authorList>
            <person name="Chambaud I."/>
            <person name="Heilig R."/>
            <person name="Ferris S."/>
            <person name="Barbe V."/>
            <person name="Samson D."/>
            <person name="Galisson F."/>
            <person name="Moszer I."/>
            <person name="Dybvig K."/>
            <person name="Wroblewski H."/>
            <person name="Viari A."/>
            <person name="Rocha E.P.C."/>
            <person name="Blanchard A."/>
        </authorList>
    </citation>
    <scope>NUCLEOTIDE SEQUENCE [LARGE SCALE GENOMIC DNA]</scope>
    <source>
        <strain>UAB CTIP</strain>
    </source>
</reference>
<keyword id="KW-0227">DNA damage</keyword>
<keyword id="KW-0234">DNA repair</keyword>
<keyword id="KW-0235">DNA replication</keyword>
<keyword id="KW-0436">Ligase</keyword>
<keyword id="KW-0460">Magnesium</keyword>
<keyword id="KW-0464">Manganese</keyword>
<keyword id="KW-0479">Metal-binding</keyword>
<keyword id="KW-0520">NAD</keyword>
<keyword id="KW-1185">Reference proteome</keyword>
<keyword id="KW-0862">Zinc</keyword>
<protein>
    <recommendedName>
        <fullName evidence="1">DNA ligase</fullName>
        <ecNumber evidence="1">6.5.1.2</ecNumber>
    </recommendedName>
    <alternativeName>
        <fullName evidence="1">Polydeoxyribonucleotide synthase [NAD(+)]</fullName>
    </alternativeName>
</protein>
<proteinExistence type="inferred from homology"/>
<accession>Q98QH2</accession>
<evidence type="ECO:0000255" key="1">
    <source>
        <dbReference type="HAMAP-Rule" id="MF_01588"/>
    </source>
</evidence>